<sequence>MNSEKEDEPLEEIGDSNNVLDLTSYQLHSLDTVELPPNLIELDLTANRLSGLDSRIAQLSTLKKLSLRQNLIDDSAVEPLSHWDALSDLEELVLRDNKLAKVPDVSIFTKLLVYDISFNEITSLEGISKASSTLKELYVSKNEVNKIMEIEHLHNLQILELGSNRLRVMENLENFTKLEELWLGRNRIKVVNLCGLKCIKKISLQSNRLTSMKGFEECVALEELYLSHNGISKMEGLSALVNLRVLDVSNNKLTSVDDIQNLTKLEDLWLNDNQIESLEAITEAVTGSKEKLTTIYLENNPCAKSSDYVAAVRQIFPNVEQIDSNLFA</sequence>
<accession>Q84WJ9</accession>
<accession>Q8LG14</accession>
<comment type="function">
    <text evidence="1">Inhibitor of protein-phosphatase 1 (PP1). Binds to and inhibits PP1 activity.</text>
</comment>
<comment type="subunit">
    <text evidence="3">Interacts with human protein phosphatase PPP1C.</text>
</comment>
<dbReference type="EMBL" id="AF296838">
    <property type="status" value="NOT_ANNOTATED_CDS"/>
    <property type="molecule type" value="Genomic_DNA"/>
</dbReference>
<dbReference type="EMBL" id="CP002688">
    <property type="protein sequence ID" value="AED92737.1"/>
    <property type="molecule type" value="Genomic_DNA"/>
</dbReference>
<dbReference type="EMBL" id="BT003139">
    <property type="protein sequence ID" value="AAO24571.1"/>
    <property type="molecule type" value="mRNA"/>
</dbReference>
<dbReference type="EMBL" id="AK228123">
    <property type="protein sequence ID" value="BAF00080.1"/>
    <property type="molecule type" value="mRNA"/>
</dbReference>
<dbReference type="EMBL" id="AY084519">
    <property type="protein sequence ID" value="AAM61087.1"/>
    <property type="molecule type" value="mRNA"/>
</dbReference>
<dbReference type="RefSeq" id="NP_197469.1">
    <property type="nucleotide sequence ID" value="NM_121973.5"/>
</dbReference>
<dbReference type="SMR" id="Q84WJ9"/>
<dbReference type="FunCoup" id="Q84WJ9">
    <property type="interactions" value="1764"/>
</dbReference>
<dbReference type="IntAct" id="Q84WJ9">
    <property type="interactions" value="2"/>
</dbReference>
<dbReference type="STRING" id="3702.Q84WJ9"/>
<dbReference type="iPTMnet" id="Q84WJ9"/>
<dbReference type="PaxDb" id="3702-AT5G19680.1"/>
<dbReference type="ProteomicsDB" id="249083"/>
<dbReference type="EnsemblPlants" id="AT5G19680.1">
    <property type="protein sequence ID" value="AT5G19680.1"/>
    <property type="gene ID" value="AT5G19680"/>
</dbReference>
<dbReference type="GeneID" id="832088"/>
<dbReference type="Gramene" id="AT5G19680.1">
    <property type="protein sequence ID" value="AT5G19680.1"/>
    <property type="gene ID" value="AT5G19680"/>
</dbReference>
<dbReference type="KEGG" id="ath:AT5G19680"/>
<dbReference type="Araport" id="AT5G19680"/>
<dbReference type="TAIR" id="AT5G19680"/>
<dbReference type="eggNOG" id="KOG0531">
    <property type="taxonomic scope" value="Eukaryota"/>
</dbReference>
<dbReference type="HOGENOM" id="CLU_044236_1_1_1"/>
<dbReference type="InParanoid" id="Q84WJ9"/>
<dbReference type="OMA" id="EVWASYN"/>
<dbReference type="OrthoDB" id="266138at2759"/>
<dbReference type="PhylomeDB" id="Q84WJ9"/>
<dbReference type="PRO" id="PR:Q84WJ9"/>
<dbReference type="Proteomes" id="UP000006548">
    <property type="component" value="Chromosome 5"/>
</dbReference>
<dbReference type="ExpressionAtlas" id="Q84WJ9">
    <property type="expression patterns" value="baseline and differential"/>
</dbReference>
<dbReference type="GO" id="GO:0005737">
    <property type="term" value="C:cytoplasm"/>
    <property type="evidence" value="ECO:0000314"/>
    <property type="project" value="TAIR"/>
</dbReference>
<dbReference type="GO" id="GO:0005634">
    <property type="term" value="C:nucleus"/>
    <property type="evidence" value="ECO:0000314"/>
    <property type="project" value="TAIR"/>
</dbReference>
<dbReference type="GO" id="GO:0004864">
    <property type="term" value="F:protein phosphatase inhibitor activity"/>
    <property type="evidence" value="ECO:0007669"/>
    <property type="project" value="UniProtKB-KW"/>
</dbReference>
<dbReference type="GO" id="GO:0009738">
    <property type="term" value="P:abscisic acid-activated signaling pathway"/>
    <property type="evidence" value="ECO:0000316"/>
    <property type="project" value="TAIR"/>
</dbReference>
<dbReference type="GO" id="GO:0034504">
    <property type="term" value="P:protein localization to nucleus"/>
    <property type="evidence" value="ECO:0000316"/>
    <property type="project" value="TAIR"/>
</dbReference>
<dbReference type="FunFam" id="3.80.10.10:FF:000326">
    <property type="entry name" value="Protein phosphatase 1 regulatory inhibitor subunit PPP1R7 homolog"/>
    <property type="match status" value="1"/>
</dbReference>
<dbReference type="FunFam" id="3.80.10.10:FF:000579">
    <property type="entry name" value="Protein phosphatase 1 regulatory subunit 7"/>
    <property type="match status" value="1"/>
</dbReference>
<dbReference type="FunFam" id="3.80.10.10:FF:000312">
    <property type="entry name" value="Protein phosphatases pp1 regulatory subunit, putative"/>
    <property type="match status" value="1"/>
</dbReference>
<dbReference type="Gene3D" id="3.80.10.10">
    <property type="entry name" value="Ribonuclease Inhibitor"/>
    <property type="match status" value="3"/>
</dbReference>
<dbReference type="InterPro" id="IPR001611">
    <property type="entry name" value="Leu-rich_rpt"/>
</dbReference>
<dbReference type="InterPro" id="IPR025875">
    <property type="entry name" value="Leu-rich_rpt_4"/>
</dbReference>
<dbReference type="InterPro" id="IPR003591">
    <property type="entry name" value="Leu-rich_rpt_typical-subtyp"/>
</dbReference>
<dbReference type="InterPro" id="IPR032675">
    <property type="entry name" value="LRR_dom_sf"/>
</dbReference>
<dbReference type="PANTHER" id="PTHR15454">
    <property type="entry name" value="NISCHARIN RELATED"/>
    <property type="match status" value="1"/>
</dbReference>
<dbReference type="PANTHER" id="PTHR15454:SF56">
    <property type="entry name" value="PROTEIN PHOSPHATASE 1 REGULATORY SUBUNIT 7-RELATED"/>
    <property type="match status" value="1"/>
</dbReference>
<dbReference type="Pfam" id="PF12799">
    <property type="entry name" value="LRR_4"/>
    <property type="match status" value="1"/>
</dbReference>
<dbReference type="PRINTS" id="PR00019">
    <property type="entry name" value="LEURICHRPT"/>
</dbReference>
<dbReference type="SMART" id="SM00365">
    <property type="entry name" value="LRR_SD22"/>
    <property type="match status" value="11"/>
</dbReference>
<dbReference type="SMART" id="SM00369">
    <property type="entry name" value="LRR_TYP"/>
    <property type="match status" value="6"/>
</dbReference>
<dbReference type="SUPFAM" id="SSF52058">
    <property type="entry name" value="L domain-like"/>
    <property type="match status" value="1"/>
</dbReference>
<dbReference type="PROSITE" id="PS51450">
    <property type="entry name" value="LRR"/>
    <property type="match status" value="11"/>
</dbReference>
<feature type="chain" id="PRO_0000442226" description="Protein phosphatase 1 regulatory inhibitor subunit PPP1R7 homolog">
    <location>
        <begin position="1"/>
        <end position="328"/>
    </location>
</feature>
<feature type="repeat" description="LRR 1" evidence="2">
    <location>
        <begin position="13"/>
        <end position="36"/>
    </location>
</feature>
<feature type="repeat" description="LRR 2" evidence="2">
    <location>
        <begin position="37"/>
        <end position="59"/>
    </location>
</feature>
<feature type="repeat" description="LRR 3" evidence="2">
    <location>
        <begin position="61"/>
        <end position="82"/>
    </location>
</feature>
<feature type="repeat" description="LRR 4" evidence="2">
    <location>
        <begin position="86"/>
        <end position="110"/>
    </location>
</feature>
<feature type="repeat" description="LRR 5" evidence="2">
    <location>
        <begin position="111"/>
        <end position="130"/>
    </location>
</feature>
<feature type="repeat" description="LRR 6" evidence="2">
    <location>
        <begin position="131"/>
        <end position="153"/>
    </location>
</feature>
<feature type="repeat" description="LRR 7" evidence="2">
    <location>
        <begin position="154"/>
        <end position="177"/>
    </location>
</feature>
<feature type="repeat" description="LRR 8" evidence="2">
    <location>
        <begin position="179"/>
        <end position="196"/>
    </location>
</feature>
<feature type="repeat" description="LRR 9" evidence="2">
    <location>
        <begin position="197"/>
        <end position="221"/>
    </location>
</feature>
<feature type="repeat" description="LRR 10" evidence="2">
    <location>
        <begin position="223"/>
        <end position="240"/>
    </location>
</feature>
<feature type="repeat" description="LRR 11" evidence="2">
    <location>
        <begin position="241"/>
        <end position="264"/>
    </location>
</feature>
<feature type="repeat" description="LRR 12" evidence="2">
    <location>
        <begin position="266"/>
        <end position="287"/>
    </location>
</feature>
<feature type="repeat" description="LRR 13" evidence="2">
    <location>
        <begin position="289"/>
        <end position="312"/>
    </location>
</feature>
<feature type="sequence conflict" description="In Ref. 5; AAM61087." evidence="4" ref="5">
    <original>EKED</original>
    <variation>DKEE</variation>
    <location>
        <begin position="4"/>
        <end position="7"/>
    </location>
</feature>
<feature type="sequence conflict" description="In Ref. 5; AAM61087." evidence="4" ref="5">
    <original>L</original>
    <variation>I</variation>
    <location>
        <position position="326"/>
    </location>
</feature>
<name>PP1R7_ARATH</name>
<reference key="1">
    <citation type="journal article" date="2000" name="Nature">
        <title>Sequence and analysis of chromosome 5 of the plant Arabidopsis thaliana.</title>
        <authorList>
            <person name="Tabata S."/>
            <person name="Kaneko T."/>
            <person name="Nakamura Y."/>
            <person name="Kotani H."/>
            <person name="Kato T."/>
            <person name="Asamizu E."/>
            <person name="Miyajima N."/>
            <person name="Sasamoto S."/>
            <person name="Kimura T."/>
            <person name="Hosouchi T."/>
            <person name="Kawashima K."/>
            <person name="Kohara M."/>
            <person name="Matsumoto M."/>
            <person name="Matsuno A."/>
            <person name="Muraki A."/>
            <person name="Nakayama S."/>
            <person name="Nakazaki N."/>
            <person name="Naruo K."/>
            <person name="Okumura S."/>
            <person name="Shinpo S."/>
            <person name="Takeuchi C."/>
            <person name="Wada T."/>
            <person name="Watanabe A."/>
            <person name="Yamada M."/>
            <person name="Yasuda M."/>
            <person name="Sato S."/>
            <person name="de la Bastide M."/>
            <person name="Huang E."/>
            <person name="Spiegel L."/>
            <person name="Gnoj L."/>
            <person name="O'Shaughnessy A."/>
            <person name="Preston R."/>
            <person name="Habermann K."/>
            <person name="Murray J."/>
            <person name="Johnson D."/>
            <person name="Rohlfing T."/>
            <person name="Nelson J."/>
            <person name="Stoneking T."/>
            <person name="Pepin K."/>
            <person name="Spieth J."/>
            <person name="Sekhon M."/>
            <person name="Armstrong J."/>
            <person name="Becker M."/>
            <person name="Belter E."/>
            <person name="Cordum H."/>
            <person name="Cordes M."/>
            <person name="Courtney L."/>
            <person name="Courtney W."/>
            <person name="Dante M."/>
            <person name="Du H."/>
            <person name="Edwards J."/>
            <person name="Fryman J."/>
            <person name="Haakensen B."/>
            <person name="Lamar E."/>
            <person name="Latreille P."/>
            <person name="Leonard S."/>
            <person name="Meyer R."/>
            <person name="Mulvaney E."/>
            <person name="Ozersky P."/>
            <person name="Riley A."/>
            <person name="Strowmatt C."/>
            <person name="Wagner-McPherson C."/>
            <person name="Wollam A."/>
            <person name="Yoakum M."/>
            <person name="Bell M."/>
            <person name="Dedhia N."/>
            <person name="Parnell L."/>
            <person name="Shah R."/>
            <person name="Rodriguez M."/>
            <person name="Hoon See L."/>
            <person name="Vil D."/>
            <person name="Baker J."/>
            <person name="Kirchoff K."/>
            <person name="Toth K."/>
            <person name="King L."/>
            <person name="Bahret A."/>
            <person name="Miller B."/>
            <person name="Marra M.A."/>
            <person name="Martienssen R."/>
            <person name="McCombie W.R."/>
            <person name="Wilson R.K."/>
            <person name="Murphy G."/>
            <person name="Bancroft I."/>
            <person name="Volckaert G."/>
            <person name="Wambutt R."/>
            <person name="Duesterhoeft A."/>
            <person name="Stiekema W."/>
            <person name="Pohl T."/>
            <person name="Entian K.-D."/>
            <person name="Terryn N."/>
            <person name="Hartley N."/>
            <person name="Bent E."/>
            <person name="Johnson S."/>
            <person name="Langham S.-A."/>
            <person name="McCullagh B."/>
            <person name="Robben J."/>
            <person name="Grymonprez B."/>
            <person name="Zimmermann W."/>
            <person name="Ramsperger U."/>
            <person name="Wedler H."/>
            <person name="Balke K."/>
            <person name="Wedler E."/>
            <person name="Peters S."/>
            <person name="van Staveren M."/>
            <person name="Dirkse W."/>
            <person name="Mooijman P."/>
            <person name="Klein Lankhorst R."/>
            <person name="Weitzenegger T."/>
            <person name="Bothe G."/>
            <person name="Rose M."/>
            <person name="Hauf J."/>
            <person name="Berneiser S."/>
            <person name="Hempel S."/>
            <person name="Feldpausch M."/>
            <person name="Lamberth S."/>
            <person name="Villarroel R."/>
            <person name="Gielen J."/>
            <person name="Ardiles W."/>
            <person name="Bents O."/>
            <person name="Lemcke K."/>
            <person name="Kolesov G."/>
            <person name="Mayer K.F.X."/>
            <person name="Rudd S."/>
            <person name="Schoof H."/>
            <person name="Schueller C."/>
            <person name="Zaccaria P."/>
            <person name="Mewes H.-W."/>
            <person name="Bevan M."/>
            <person name="Fransz P.F."/>
        </authorList>
    </citation>
    <scope>NUCLEOTIDE SEQUENCE [LARGE SCALE GENOMIC DNA]</scope>
    <source>
        <strain>cv. Columbia</strain>
    </source>
</reference>
<reference key="2">
    <citation type="journal article" date="2017" name="Plant J.">
        <title>Araport11: a complete reannotation of the Arabidopsis thaliana reference genome.</title>
        <authorList>
            <person name="Cheng C.Y."/>
            <person name="Krishnakumar V."/>
            <person name="Chan A.P."/>
            <person name="Thibaud-Nissen F."/>
            <person name="Schobel S."/>
            <person name="Town C.D."/>
        </authorList>
    </citation>
    <scope>GENOME REANNOTATION</scope>
    <source>
        <strain>cv. Columbia</strain>
    </source>
</reference>
<reference key="3">
    <citation type="journal article" date="2003" name="Science">
        <title>Empirical analysis of transcriptional activity in the Arabidopsis genome.</title>
        <authorList>
            <person name="Yamada K."/>
            <person name="Lim J."/>
            <person name="Dale J.M."/>
            <person name="Chen H."/>
            <person name="Shinn P."/>
            <person name="Palm C.J."/>
            <person name="Southwick A.M."/>
            <person name="Wu H.C."/>
            <person name="Kim C.J."/>
            <person name="Nguyen M."/>
            <person name="Pham P.K."/>
            <person name="Cheuk R.F."/>
            <person name="Karlin-Newmann G."/>
            <person name="Liu S.X."/>
            <person name="Lam B."/>
            <person name="Sakano H."/>
            <person name="Wu T."/>
            <person name="Yu G."/>
            <person name="Miranda M."/>
            <person name="Quach H.L."/>
            <person name="Tripp M."/>
            <person name="Chang C.H."/>
            <person name="Lee J.M."/>
            <person name="Toriumi M.J."/>
            <person name="Chan M.M."/>
            <person name="Tang C.C."/>
            <person name="Onodera C.S."/>
            <person name="Deng J.M."/>
            <person name="Akiyama K."/>
            <person name="Ansari Y."/>
            <person name="Arakawa T."/>
            <person name="Banh J."/>
            <person name="Banno F."/>
            <person name="Bowser L."/>
            <person name="Brooks S.Y."/>
            <person name="Carninci P."/>
            <person name="Chao Q."/>
            <person name="Choy N."/>
            <person name="Enju A."/>
            <person name="Goldsmith A.D."/>
            <person name="Gurjal M."/>
            <person name="Hansen N.F."/>
            <person name="Hayashizaki Y."/>
            <person name="Johnson-Hopson C."/>
            <person name="Hsuan V.W."/>
            <person name="Iida K."/>
            <person name="Karnes M."/>
            <person name="Khan S."/>
            <person name="Koesema E."/>
            <person name="Ishida J."/>
            <person name="Jiang P.X."/>
            <person name="Jones T."/>
            <person name="Kawai J."/>
            <person name="Kamiya A."/>
            <person name="Meyers C."/>
            <person name="Nakajima M."/>
            <person name="Narusaka M."/>
            <person name="Seki M."/>
            <person name="Sakurai T."/>
            <person name="Satou M."/>
            <person name="Tamse R."/>
            <person name="Vaysberg M."/>
            <person name="Wallender E.K."/>
            <person name="Wong C."/>
            <person name="Yamamura Y."/>
            <person name="Yuan S."/>
            <person name="Shinozaki K."/>
            <person name="Davis R.W."/>
            <person name="Theologis A."/>
            <person name="Ecker J.R."/>
        </authorList>
    </citation>
    <scope>NUCLEOTIDE SEQUENCE [LARGE SCALE MRNA]</scope>
    <source>
        <strain>cv. Columbia</strain>
    </source>
</reference>
<reference key="4">
    <citation type="submission" date="2006-07" db="EMBL/GenBank/DDBJ databases">
        <title>Large-scale analysis of RIKEN Arabidopsis full-length (RAFL) cDNAs.</title>
        <authorList>
            <person name="Totoki Y."/>
            <person name="Seki M."/>
            <person name="Ishida J."/>
            <person name="Nakajima M."/>
            <person name="Enju A."/>
            <person name="Kamiya A."/>
            <person name="Narusaka M."/>
            <person name="Shin-i T."/>
            <person name="Nakagawa M."/>
            <person name="Sakamoto N."/>
            <person name="Oishi K."/>
            <person name="Kohara Y."/>
            <person name="Kobayashi M."/>
            <person name="Toyoda A."/>
            <person name="Sakaki Y."/>
            <person name="Sakurai T."/>
            <person name="Iida K."/>
            <person name="Akiyama K."/>
            <person name="Satou M."/>
            <person name="Toyoda T."/>
            <person name="Konagaya A."/>
            <person name="Carninci P."/>
            <person name="Kawai J."/>
            <person name="Hayashizaki Y."/>
            <person name="Shinozaki K."/>
        </authorList>
    </citation>
    <scope>NUCLEOTIDE SEQUENCE [LARGE SCALE MRNA]</scope>
    <source>
        <strain>cv. Columbia</strain>
    </source>
</reference>
<reference key="5">
    <citation type="submission" date="2002-03" db="EMBL/GenBank/DDBJ databases">
        <title>Full-length cDNA from Arabidopsis thaliana.</title>
        <authorList>
            <person name="Brover V.V."/>
            <person name="Troukhan M.E."/>
            <person name="Alexandrov N.A."/>
            <person name="Lu Y.-P."/>
            <person name="Flavell R.B."/>
            <person name="Feldmann K.A."/>
        </authorList>
    </citation>
    <scope>NUCLEOTIDE SEQUENCE [LARGE SCALE MRNA]</scope>
</reference>
<reference key="6">
    <citation type="journal article" date="2011" name="Biochem. J.">
        <title>Identification and characterization of AtI-2, an Arabidopsis homologue of an ancient protein phosphatase 1 (PP1) regulatory subunit.</title>
        <authorList>
            <person name="Templeton G.W."/>
            <person name="Nimick M."/>
            <person name="Morrice N."/>
            <person name="Campbell D."/>
            <person name="Goudreault M."/>
            <person name="Gingras A.C."/>
            <person name="Takemiya A."/>
            <person name="Shimazaki K."/>
            <person name="Moorhead G.B."/>
        </authorList>
    </citation>
    <scope>IDENTIFICATION BY MASS SPECTROMETRY</scope>
    <scope>INTERACTION WITH HUMAN PROTEIN PHOSPHATASE PPP1CC</scope>
</reference>
<evidence type="ECO:0000250" key="1">
    <source>
        <dbReference type="UniProtKB" id="Q9LTK0"/>
    </source>
</evidence>
<evidence type="ECO:0000255" key="2"/>
<evidence type="ECO:0000269" key="3">
    <source>
    </source>
</evidence>
<evidence type="ECO:0000305" key="4"/>
<evidence type="ECO:0000312" key="5">
    <source>
        <dbReference type="Araport" id="AT5G19680"/>
    </source>
</evidence>
<proteinExistence type="evidence at protein level"/>
<protein>
    <recommendedName>
        <fullName evidence="4">Protein phosphatase 1 regulatory inhibitor subunit PPP1R7 homolog</fullName>
    </recommendedName>
</protein>
<organism>
    <name type="scientific">Arabidopsis thaliana</name>
    <name type="common">Mouse-ear cress</name>
    <dbReference type="NCBI Taxonomy" id="3702"/>
    <lineage>
        <taxon>Eukaryota</taxon>
        <taxon>Viridiplantae</taxon>
        <taxon>Streptophyta</taxon>
        <taxon>Embryophyta</taxon>
        <taxon>Tracheophyta</taxon>
        <taxon>Spermatophyta</taxon>
        <taxon>Magnoliopsida</taxon>
        <taxon>eudicotyledons</taxon>
        <taxon>Gunneridae</taxon>
        <taxon>Pentapetalae</taxon>
        <taxon>rosids</taxon>
        <taxon>malvids</taxon>
        <taxon>Brassicales</taxon>
        <taxon>Brassicaceae</taxon>
        <taxon>Camelineae</taxon>
        <taxon>Arabidopsis</taxon>
    </lineage>
</organism>
<keyword id="KW-0433">Leucine-rich repeat</keyword>
<keyword id="KW-0650">Protein phosphatase inhibitor</keyword>
<keyword id="KW-1185">Reference proteome</keyword>
<keyword id="KW-0677">Repeat</keyword>
<gene>
    <name evidence="5" type="ordered locus">At5g19680</name>
</gene>